<accession>Q8BX32</accession>
<accession>Q9D609</accession>
<organism>
    <name type="scientific">Mus musculus</name>
    <name type="common">Mouse</name>
    <dbReference type="NCBI Taxonomy" id="10090"/>
    <lineage>
        <taxon>Eukaryota</taxon>
        <taxon>Metazoa</taxon>
        <taxon>Chordata</taxon>
        <taxon>Craniata</taxon>
        <taxon>Vertebrata</taxon>
        <taxon>Euteleostomi</taxon>
        <taxon>Mammalia</taxon>
        <taxon>Eutheria</taxon>
        <taxon>Euarchontoglires</taxon>
        <taxon>Glires</taxon>
        <taxon>Rodentia</taxon>
        <taxon>Myomorpha</taxon>
        <taxon>Muroidea</taxon>
        <taxon>Muridae</taxon>
        <taxon>Murinae</taxon>
        <taxon>Mus</taxon>
        <taxon>Mus</taxon>
    </lineage>
</organism>
<reference key="1">
    <citation type="journal article" date="2005" name="Science">
        <title>The transcriptional landscape of the mammalian genome.</title>
        <authorList>
            <person name="Carninci P."/>
            <person name="Kasukawa T."/>
            <person name="Katayama S."/>
            <person name="Gough J."/>
            <person name="Frith M.C."/>
            <person name="Maeda N."/>
            <person name="Oyama R."/>
            <person name="Ravasi T."/>
            <person name="Lenhard B."/>
            <person name="Wells C."/>
            <person name="Kodzius R."/>
            <person name="Shimokawa K."/>
            <person name="Bajic V.B."/>
            <person name="Brenner S.E."/>
            <person name="Batalov S."/>
            <person name="Forrest A.R."/>
            <person name="Zavolan M."/>
            <person name="Davis M.J."/>
            <person name="Wilming L.G."/>
            <person name="Aidinis V."/>
            <person name="Allen J.E."/>
            <person name="Ambesi-Impiombato A."/>
            <person name="Apweiler R."/>
            <person name="Aturaliya R.N."/>
            <person name="Bailey T.L."/>
            <person name="Bansal M."/>
            <person name="Baxter L."/>
            <person name="Beisel K.W."/>
            <person name="Bersano T."/>
            <person name="Bono H."/>
            <person name="Chalk A.M."/>
            <person name="Chiu K.P."/>
            <person name="Choudhary V."/>
            <person name="Christoffels A."/>
            <person name="Clutterbuck D.R."/>
            <person name="Crowe M.L."/>
            <person name="Dalla E."/>
            <person name="Dalrymple B.P."/>
            <person name="de Bono B."/>
            <person name="Della Gatta G."/>
            <person name="di Bernardo D."/>
            <person name="Down T."/>
            <person name="Engstrom P."/>
            <person name="Fagiolini M."/>
            <person name="Faulkner G."/>
            <person name="Fletcher C.F."/>
            <person name="Fukushima T."/>
            <person name="Furuno M."/>
            <person name="Futaki S."/>
            <person name="Gariboldi M."/>
            <person name="Georgii-Hemming P."/>
            <person name="Gingeras T.R."/>
            <person name="Gojobori T."/>
            <person name="Green R.E."/>
            <person name="Gustincich S."/>
            <person name="Harbers M."/>
            <person name="Hayashi Y."/>
            <person name="Hensch T.K."/>
            <person name="Hirokawa N."/>
            <person name="Hill D."/>
            <person name="Huminiecki L."/>
            <person name="Iacono M."/>
            <person name="Ikeo K."/>
            <person name="Iwama A."/>
            <person name="Ishikawa T."/>
            <person name="Jakt M."/>
            <person name="Kanapin A."/>
            <person name="Katoh M."/>
            <person name="Kawasawa Y."/>
            <person name="Kelso J."/>
            <person name="Kitamura H."/>
            <person name="Kitano H."/>
            <person name="Kollias G."/>
            <person name="Krishnan S.P."/>
            <person name="Kruger A."/>
            <person name="Kummerfeld S.K."/>
            <person name="Kurochkin I.V."/>
            <person name="Lareau L.F."/>
            <person name="Lazarevic D."/>
            <person name="Lipovich L."/>
            <person name="Liu J."/>
            <person name="Liuni S."/>
            <person name="McWilliam S."/>
            <person name="Madan Babu M."/>
            <person name="Madera M."/>
            <person name="Marchionni L."/>
            <person name="Matsuda H."/>
            <person name="Matsuzawa S."/>
            <person name="Miki H."/>
            <person name="Mignone F."/>
            <person name="Miyake S."/>
            <person name="Morris K."/>
            <person name="Mottagui-Tabar S."/>
            <person name="Mulder N."/>
            <person name="Nakano N."/>
            <person name="Nakauchi H."/>
            <person name="Ng P."/>
            <person name="Nilsson R."/>
            <person name="Nishiguchi S."/>
            <person name="Nishikawa S."/>
            <person name="Nori F."/>
            <person name="Ohara O."/>
            <person name="Okazaki Y."/>
            <person name="Orlando V."/>
            <person name="Pang K.C."/>
            <person name="Pavan W.J."/>
            <person name="Pavesi G."/>
            <person name="Pesole G."/>
            <person name="Petrovsky N."/>
            <person name="Piazza S."/>
            <person name="Reed J."/>
            <person name="Reid J.F."/>
            <person name="Ring B.Z."/>
            <person name="Ringwald M."/>
            <person name="Rost B."/>
            <person name="Ruan Y."/>
            <person name="Salzberg S.L."/>
            <person name="Sandelin A."/>
            <person name="Schneider C."/>
            <person name="Schoenbach C."/>
            <person name="Sekiguchi K."/>
            <person name="Semple C.A."/>
            <person name="Seno S."/>
            <person name="Sessa L."/>
            <person name="Sheng Y."/>
            <person name="Shibata Y."/>
            <person name="Shimada H."/>
            <person name="Shimada K."/>
            <person name="Silva D."/>
            <person name="Sinclair B."/>
            <person name="Sperling S."/>
            <person name="Stupka E."/>
            <person name="Sugiura K."/>
            <person name="Sultana R."/>
            <person name="Takenaka Y."/>
            <person name="Taki K."/>
            <person name="Tammoja K."/>
            <person name="Tan S.L."/>
            <person name="Tang S."/>
            <person name="Taylor M.S."/>
            <person name="Tegner J."/>
            <person name="Teichmann S.A."/>
            <person name="Ueda H.R."/>
            <person name="van Nimwegen E."/>
            <person name="Verardo R."/>
            <person name="Wei C.L."/>
            <person name="Yagi K."/>
            <person name="Yamanishi H."/>
            <person name="Zabarovsky E."/>
            <person name="Zhu S."/>
            <person name="Zimmer A."/>
            <person name="Hide W."/>
            <person name="Bult C."/>
            <person name="Grimmond S.M."/>
            <person name="Teasdale R.D."/>
            <person name="Liu E.T."/>
            <person name="Brusic V."/>
            <person name="Quackenbush J."/>
            <person name="Wahlestedt C."/>
            <person name="Mattick J.S."/>
            <person name="Hume D.A."/>
            <person name="Kai C."/>
            <person name="Sasaki D."/>
            <person name="Tomaru Y."/>
            <person name="Fukuda S."/>
            <person name="Kanamori-Katayama M."/>
            <person name="Suzuki M."/>
            <person name="Aoki J."/>
            <person name="Arakawa T."/>
            <person name="Iida J."/>
            <person name="Imamura K."/>
            <person name="Itoh M."/>
            <person name="Kato T."/>
            <person name="Kawaji H."/>
            <person name="Kawagashira N."/>
            <person name="Kawashima T."/>
            <person name="Kojima M."/>
            <person name="Kondo S."/>
            <person name="Konno H."/>
            <person name="Nakano K."/>
            <person name="Ninomiya N."/>
            <person name="Nishio T."/>
            <person name="Okada M."/>
            <person name="Plessy C."/>
            <person name="Shibata K."/>
            <person name="Shiraki T."/>
            <person name="Suzuki S."/>
            <person name="Tagami M."/>
            <person name="Waki K."/>
            <person name="Watahiki A."/>
            <person name="Okamura-Oho Y."/>
            <person name="Suzuki H."/>
            <person name="Kawai J."/>
            <person name="Hayashizaki Y."/>
        </authorList>
    </citation>
    <scope>NUCLEOTIDE SEQUENCE [LARGE SCALE MRNA] (ISOFORMS 1 AND 2)</scope>
    <source>
        <strain>C57BL/6J</strain>
        <tissue>Embryonic stem cell</tissue>
        <tissue>Head</tissue>
    </source>
</reference>
<reference key="2">
    <citation type="journal article" date="2004" name="Genome Res.">
        <title>The status, quality, and expansion of the NIH full-length cDNA project: the Mammalian Gene Collection (MGC).</title>
        <authorList>
            <consortium name="The MGC Project Team"/>
        </authorList>
    </citation>
    <scope>NUCLEOTIDE SEQUENCE [LARGE SCALE MRNA] (ISOFORM 1)</scope>
    <source>
        <tissue>Brain</tissue>
    </source>
</reference>
<reference key="3">
    <citation type="journal article" date="2016" name="PLoS ONE">
        <title>The GIY-YIG type endonuclease ankyrin repeat and LEM domain-containing protein 1 (ANKLE1) is dispensable for mouse hematopoiesis.</title>
        <authorList>
            <person name="Braun J."/>
            <person name="Meixner A."/>
            <person name="Brachner A."/>
            <person name="Foisner R."/>
        </authorList>
    </citation>
    <scope>TISSUE SPECIFICITY</scope>
</reference>
<comment type="function">
    <text evidence="1">Catalytic subunit of the SLX1-SLX4 structure-specific endonuclease that resolves DNA secondary structures generated during DNA repair and recombination. Has endonuclease activity towards branched DNA substrates, introducing single-strand cuts in duplex DNA close to junctions with ss-DNA. Has a preference for 5'-flap structures, and promotes symmetrical cleavage of static and migrating Holliday junctions (HJs). Resolves HJs by generating two pairs of ligatable, nicked duplex products.</text>
</comment>
<comment type="cofactor">
    <cofactor evidence="1">
        <name>a divalent metal cation</name>
        <dbReference type="ChEBI" id="CHEBI:60240"/>
    </cofactor>
</comment>
<comment type="subunit">
    <text evidence="1">Forms a heterodimer with SLX4.</text>
</comment>
<comment type="subcellular location">
    <subcellularLocation>
        <location evidence="1">Nucleus</location>
    </subcellularLocation>
</comment>
<comment type="alternative products">
    <event type="alternative splicing"/>
    <isoform>
        <id>Q8BX32-1</id>
        <name>1</name>
        <sequence type="displayed"/>
    </isoform>
    <isoform>
        <id>Q8BX32-2</id>
        <name>2</name>
        <sequence type="described" ref="VSP_033332 VSP_033333"/>
    </isoform>
</comment>
<comment type="tissue specificity">
    <text evidence="2">Expressed in testis, colon, bone marrow, brain, thymus and to a lesser extent in heart, kidney, skeletal muscle and spleen.</text>
</comment>
<comment type="similarity">
    <text evidence="1">Belongs to the SLX1 family.</text>
</comment>
<evidence type="ECO:0000255" key="1">
    <source>
        <dbReference type="HAMAP-Rule" id="MF_03100"/>
    </source>
</evidence>
<evidence type="ECO:0000269" key="2">
    <source>
    </source>
</evidence>
<evidence type="ECO:0000303" key="3">
    <source>
    </source>
</evidence>
<keyword id="KW-0025">Alternative splicing</keyword>
<keyword id="KW-0227">DNA damage</keyword>
<keyword id="KW-0233">DNA recombination</keyword>
<keyword id="KW-0234">DNA repair</keyword>
<keyword id="KW-0255">Endonuclease</keyword>
<keyword id="KW-0378">Hydrolase</keyword>
<keyword id="KW-0479">Metal-binding</keyword>
<keyword id="KW-0540">Nuclease</keyword>
<keyword id="KW-0539">Nucleus</keyword>
<keyword id="KW-1185">Reference proteome</keyword>
<keyword id="KW-0862">Zinc</keyword>
<keyword id="KW-0863">Zinc-finger</keyword>
<proteinExistence type="evidence at transcript level"/>
<protein>
    <recommendedName>
        <fullName evidence="1">Structure-specific endonuclease subunit SLX1</fullName>
        <ecNumber evidence="1">3.1.-.-</ecNumber>
    </recommendedName>
    <alternativeName>
        <fullName evidence="1">GIY-YIG domain-containing protein 1</fullName>
    </alternativeName>
</protein>
<sequence>MDHAARPGRFFGVYLLYCQNPRHRGRVYVGFTVNPARRVRQHNAGRKKGGAWRTSGRGPWDMVLIIHGFPSAVAALRFEWAWQHPQASRRLTHVGPRLRSEAAFAFHLRVLAHMLRVPPWVRLPLTLRWLRPDFRHELCPAPPAHMPIAFGPPPPQPLVPKRPAVSEADSERQLDLGTKARCSLCARLLQDEEGPLCCPHPGCPLRAHIICLAEEFLQEEPGQLLPLEGHCPSCKKSLLWGNLVGQCHADTEEEEDLELEEEHWTDLLET</sequence>
<feature type="chain" id="PRO_0000332121" description="Structure-specific endonuclease subunit SLX1">
    <location>
        <begin position="1"/>
        <end position="270"/>
    </location>
</feature>
<feature type="domain" description="GIY-YIG" evidence="1">
    <location>
        <begin position="9"/>
        <end position="94"/>
    </location>
</feature>
<feature type="zinc finger region" description="SLX1-type" evidence="1">
    <location>
        <begin position="182"/>
        <end position="234"/>
    </location>
</feature>
<feature type="splice variant" id="VSP_033332" description="In isoform 2." evidence="3">
    <original>DEEGPLCCPHPGCP</original>
    <variation>VRAHRGGDLGLCPP</variation>
    <location>
        <begin position="191"/>
        <end position="204"/>
    </location>
</feature>
<feature type="splice variant" id="VSP_033333" description="In isoform 2." evidence="3">
    <location>
        <begin position="205"/>
        <end position="270"/>
    </location>
</feature>
<dbReference type="EC" id="3.1.-.-" evidence="1"/>
<dbReference type="EMBL" id="AK014753">
    <property type="protein sequence ID" value="BAB29533.1"/>
    <property type="molecule type" value="mRNA"/>
</dbReference>
<dbReference type="EMBL" id="AK049139">
    <property type="protein sequence ID" value="BAC33566.1"/>
    <property type="molecule type" value="mRNA"/>
</dbReference>
<dbReference type="EMBL" id="BC145688">
    <property type="protein sequence ID" value="AAI45689.1"/>
    <property type="molecule type" value="mRNA"/>
</dbReference>
<dbReference type="CCDS" id="CCDS21838.1">
    <molecule id="Q8BX32-1"/>
</dbReference>
<dbReference type="RefSeq" id="NP_083696.2">
    <molecule id="Q8BX32-1"/>
    <property type="nucleotide sequence ID" value="NM_029420.4"/>
</dbReference>
<dbReference type="SMR" id="Q8BX32"/>
<dbReference type="BioGRID" id="217722">
    <property type="interactions" value="1"/>
</dbReference>
<dbReference type="FunCoup" id="Q8BX32">
    <property type="interactions" value="401"/>
</dbReference>
<dbReference type="STRING" id="10090.ENSMUSP00000118182"/>
<dbReference type="PhosphoSitePlus" id="Q8BX32"/>
<dbReference type="PaxDb" id="10090-ENSMUSP00000118182"/>
<dbReference type="PeptideAtlas" id="Q8BX32"/>
<dbReference type="ProteomicsDB" id="261085">
    <molecule id="Q8BX32-1"/>
</dbReference>
<dbReference type="ProteomicsDB" id="261086">
    <molecule id="Q8BX32-2"/>
</dbReference>
<dbReference type="DNASU" id="75764"/>
<dbReference type="Ensembl" id="ENSMUST00000144897.2">
    <molecule id="Q8BX32-1"/>
    <property type="protein sequence ID" value="ENSMUSP00000118182.2"/>
    <property type="gene ID" value="ENSMUSG00000059772.13"/>
</dbReference>
<dbReference type="GeneID" id="75764"/>
<dbReference type="KEGG" id="mmu:75764"/>
<dbReference type="UCSC" id="uc009jsh.2">
    <molecule id="Q8BX32-1"/>
    <property type="organism name" value="mouse"/>
</dbReference>
<dbReference type="AGR" id="MGI:1915220"/>
<dbReference type="CTD" id="79008"/>
<dbReference type="MGI" id="MGI:1915220">
    <property type="gene designation" value="Slx1b"/>
</dbReference>
<dbReference type="VEuPathDB" id="HostDB:ENSMUSG00000059772"/>
<dbReference type="eggNOG" id="KOG3005">
    <property type="taxonomic scope" value="Eukaryota"/>
</dbReference>
<dbReference type="GeneTree" id="ENSGT00390000013368"/>
<dbReference type="HOGENOM" id="CLU_030739_0_0_1"/>
<dbReference type="InParanoid" id="Q8BX32"/>
<dbReference type="OMA" id="HNRGCDF"/>
<dbReference type="OrthoDB" id="24645at2759"/>
<dbReference type="PhylomeDB" id="Q8BX32"/>
<dbReference type="TreeFam" id="TF352344"/>
<dbReference type="Reactome" id="R-MMU-5693568">
    <property type="pathway name" value="Resolution of D-loop Structures through Holliday Junction Intermediates"/>
</dbReference>
<dbReference type="Reactome" id="R-MMU-6783310">
    <property type="pathway name" value="Fanconi Anemia Pathway"/>
</dbReference>
<dbReference type="BioGRID-ORCS" id="75764">
    <property type="hits" value="7 hits in 113 CRISPR screens"/>
</dbReference>
<dbReference type="ChiTaRS" id="Slx1b">
    <property type="organism name" value="mouse"/>
</dbReference>
<dbReference type="PRO" id="PR:Q8BX32"/>
<dbReference type="Proteomes" id="UP000000589">
    <property type="component" value="Chromosome 7"/>
</dbReference>
<dbReference type="RNAct" id="Q8BX32">
    <property type="molecule type" value="protein"/>
</dbReference>
<dbReference type="Bgee" id="ENSMUSG00000059772">
    <property type="expression patterns" value="Expressed in retinal neural layer and 105 other cell types or tissues"/>
</dbReference>
<dbReference type="ExpressionAtlas" id="Q8BX32">
    <property type="expression patterns" value="baseline and differential"/>
</dbReference>
<dbReference type="GO" id="GO:0033557">
    <property type="term" value="C:Slx1-Slx4 complex"/>
    <property type="evidence" value="ECO:0007669"/>
    <property type="project" value="UniProtKB-UniRule"/>
</dbReference>
<dbReference type="GO" id="GO:0017108">
    <property type="term" value="F:5'-flap endonuclease activity"/>
    <property type="evidence" value="ECO:0007669"/>
    <property type="project" value="UniProtKB-UniRule"/>
</dbReference>
<dbReference type="GO" id="GO:0008821">
    <property type="term" value="F:crossover junction DNA endonuclease activity"/>
    <property type="evidence" value="ECO:0007669"/>
    <property type="project" value="UniProtKB-UniRule"/>
</dbReference>
<dbReference type="GO" id="GO:0008270">
    <property type="term" value="F:zinc ion binding"/>
    <property type="evidence" value="ECO:0007669"/>
    <property type="project" value="UniProtKB-KW"/>
</dbReference>
<dbReference type="GO" id="GO:0006310">
    <property type="term" value="P:DNA recombination"/>
    <property type="evidence" value="ECO:0007669"/>
    <property type="project" value="UniProtKB-UniRule"/>
</dbReference>
<dbReference type="GO" id="GO:0006281">
    <property type="term" value="P:DNA repair"/>
    <property type="evidence" value="ECO:0007669"/>
    <property type="project" value="UniProtKB-UniRule"/>
</dbReference>
<dbReference type="GO" id="GO:1904431">
    <property type="term" value="P:positive regulation of t-circle formation"/>
    <property type="evidence" value="ECO:0000315"/>
    <property type="project" value="BHF-UCL"/>
</dbReference>
<dbReference type="GO" id="GO:0090656">
    <property type="term" value="P:t-circle formation"/>
    <property type="evidence" value="ECO:0000315"/>
    <property type="project" value="BHF-UCL"/>
</dbReference>
<dbReference type="CDD" id="cd10455">
    <property type="entry name" value="GIY-YIG_SLX1"/>
    <property type="match status" value="1"/>
</dbReference>
<dbReference type="FunFam" id="3.30.40.10:FF:000392">
    <property type="entry name" value="Structure-specific endonuclease subunit SLX1"/>
    <property type="match status" value="1"/>
</dbReference>
<dbReference type="FunFam" id="3.40.1440.10:FF:000003">
    <property type="entry name" value="Structure-specific endonuclease subunit SLX1"/>
    <property type="match status" value="1"/>
</dbReference>
<dbReference type="Gene3D" id="3.40.1440.10">
    <property type="entry name" value="GIY-YIG endonuclease"/>
    <property type="match status" value="1"/>
</dbReference>
<dbReference type="Gene3D" id="3.30.40.10">
    <property type="entry name" value="Zinc/RING finger domain, C3HC4 (zinc finger)"/>
    <property type="match status" value="1"/>
</dbReference>
<dbReference type="HAMAP" id="MF_03100">
    <property type="entry name" value="Endonuc_su_Slx1"/>
    <property type="match status" value="1"/>
</dbReference>
<dbReference type="InterPro" id="IPR000305">
    <property type="entry name" value="GIY-YIG_endonuc"/>
</dbReference>
<dbReference type="InterPro" id="IPR035901">
    <property type="entry name" value="GIY-YIG_endonuc_sf"/>
</dbReference>
<dbReference type="InterPro" id="IPR027520">
    <property type="entry name" value="Slx1"/>
</dbReference>
<dbReference type="InterPro" id="IPR048749">
    <property type="entry name" value="SLX1_C"/>
</dbReference>
<dbReference type="InterPro" id="IPR050381">
    <property type="entry name" value="SLX1_endonuclease"/>
</dbReference>
<dbReference type="InterPro" id="IPR013083">
    <property type="entry name" value="Znf_RING/FYVE/PHD"/>
</dbReference>
<dbReference type="PANTHER" id="PTHR20208">
    <property type="entry name" value="STRUCTURE-SPECIFIC ENDONUCLEASE SUBUNIT SLX1"/>
    <property type="match status" value="1"/>
</dbReference>
<dbReference type="PANTHER" id="PTHR20208:SF10">
    <property type="entry name" value="STRUCTURE-SPECIFIC ENDONUCLEASE SUBUNIT SLX1"/>
    <property type="match status" value="1"/>
</dbReference>
<dbReference type="Pfam" id="PF01541">
    <property type="entry name" value="GIY-YIG"/>
    <property type="match status" value="1"/>
</dbReference>
<dbReference type="Pfam" id="PF21202">
    <property type="entry name" value="SLX1_C"/>
    <property type="match status" value="1"/>
</dbReference>
<dbReference type="SMART" id="SM00465">
    <property type="entry name" value="GIYc"/>
    <property type="match status" value="1"/>
</dbReference>
<dbReference type="SUPFAM" id="SSF82771">
    <property type="entry name" value="GIY-YIG endonuclease"/>
    <property type="match status" value="1"/>
</dbReference>
<dbReference type="PROSITE" id="PS50164">
    <property type="entry name" value="GIY_YIG"/>
    <property type="match status" value="1"/>
</dbReference>
<name>SLX1_MOUSE</name>
<gene>
    <name type="primary">Slx1b</name>
    <name type="synonym">Giyd1</name>
    <name type="synonym">Giyd2</name>
    <name type="synonym">Slx1</name>
</gene>